<dbReference type="EMBL" id="AP006878">
    <property type="protein sequence ID" value="BAD86384.1"/>
    <property type="molecule type" value="Genomic_DNA"/>
</dbReference>
<dbReference type="RefSeq" id="WP_011251145.1">
    <property type="nucleotide sequence ID" value="NC_006624.1"/>
</dbReference>
<dbReference type="SMR" id="Q5JHN0"/>
<dbReference type="FunCoup" id="Q5JHN0">
    <property type="interactions" value="55"/>
</dbReference>
<dbReference type="STRING" id="69014.TK2195"/>
<dbReference type="EnsemblBacteria" id="BAD86384">
    <property type="protein sequence ID" value="BAD86384"/>
    <property type="gene ID" value="TK2195"/>
</dbReference>
<dbReference type="GeneID" id="78448735"/>
<dbReference type="KEGG" id="tko:TK2195"/>
<dbReference type="PATRIC" id="fig|69014.16.peg.2150"/>
<dbReference type="eggNOG" id="arCOG04229">
    <property type="taxonomic scope" value="Archaea"/>
</dbReference>
<dbReference type="HOGENOM" id="CLU_128576_0_0_2"/>
<dbReference type="InParanoid" id="Q5JHN0"/>
<dbReference type="OrthoDB" id="7000at2157"/>
<dbReference type="PhylomeDB" id="Q5JHN0"/>
<dbReference type="Proteomes" id="UP000000536">
    <property type="component" value="Chromosome"/>
</dbReference>
<dbReference type="GO" id="GO:0009347">
    <property type="term" value="C:aspartate carbamoyltransferase complex"/>
    <property type="evidence" value="ECO:0000318"/>
    <property type="project" value="GO_Central"/>
</dbReference>
<dbReference type="GO" id="GO:0046872">
    <property type="term" value="F:metal ion binding"/>
    <property type="evidence" value="ECO:0007669"/>
    <property type="project" value="UniProtKB-KW"/>
</dbReference>
<dbReference type="GO" id="GO:0006207">
    <property type="term" value="P:'de novo' pyrimidine nucleobase biosynthetic process"/>
    <property type="evidence" value="ECO:0000318"/>
    <property type="project" value="GO_Central"/>
</dbReference>
<dbReference type="GO" id="GO:0006221">
    <property type="term" value="P:pyrimidine nucleotide biosynthetic process"/>
    <property type="evidence" value="ECO:0007669"/>
    <property type="project" value="UniProtKB-UniRule"/>
</dbReference>
<dbReference type="Gene3D" id="2.30.30.20">
    <property type="entry name" value="Aspartate carbamoyltransferase regulatory subunit, C-terminal domain"/>
    <property type="match status" value="1"/>
</dbReference>
<dbReference type="Gene3D" id="3.30.70.140">
    <property type="entry name" value="Aspartate carbamoyltransferase regulatory subunit, N-terminal domain"/>
    <property type="match status" value="1"/>
</dbReference>
<dbReference type="HAMAP" id="MF_00002">
    <property type="entry name" value="Asp_carb_tr_reg"/>
    <property type="match status" value="1"/>
</dbReference>
<dbReference type="InterPro" id="IPR020545">
    <property type="entry name" value="Asp_carbamoyltransf_reg_N"/>
</dbReference>
<dbReference type="InterPro" id="IPR002801">
    <property type="entry name" value="Asp_carbamoylTrfase_reg"/>
</dbReference>
<dbReference type="InterPro" id="IPR020542">
    <property type="entry name" value="Asp_carbamoyltrfase_reg_C"/>
</dbReference>
<dbReference type="InterPro" id="IPR036792">
    <property type="entry name" value="Asp_carbatrfase_reg_C_sf"/>
</dbReference>
<dbReference type="InterPro" id="IPR036793">
    <property type="entry name" value="Asp_carbatrfase_reg_N_sf"/>
</dbReference>
<dbReference type="NCBIfam" id="TIGR00240">
    <property type="entry name" value="ATCase_reg"/>
    <property type="match status" value="1"/>
</dbReference>
<dbReference type="PANTHER" id="PTHR35805">
    <property type="entry name" value="ASPARTATE CARBAMOYLTRANSFERASE REGULATORY CHAIN"/>
    <property type="match status" value="1"/>
</dbReference>
<dbReference type="PANTHER" id="PTHR35805:SF1">
    <property type="entry name" value="ASPARTATE CARBAMOYLTRANSFERASE REGULATORY CHAIN"/>
    <property type="match status" value="1"/>
</dbReference>
<dbReference type="Pfam" id="PF01948">
    <property type="entry name" value="PyrI"/>
    <property type="match status" value="1"/>
</dbReference>
<dbReference type="Pfam" id="PF02748">
    <property type="entry name" value="PyrI_C"/>
    <property type="match status" value="1"/>
</dbReference>
<dbReference type="SUPFAM" id="SSF57825">
    <property type="entry name" value="Aspartate carbamoyltransferase, Regulatory-chain, C-terminal domain"/>
    <property type="match status" value="1"/>
</dbReference>
<dbReference type="SUPFAM" id="SSF54893">
    <property type="entry name" value="Aspartate carbamoyltransferase, Regulatory-chain, N-terminal domain"/>
    <property type="match status" value="1"/>
</dbReference>
<organism>
    <name type="scientific">Thermococcus kodakarensis (strain ATCC BAA-918 / JCM 12380 / KOD1)</name>
    <name type="common">Pyrococcus kodakaraensis (strain KOD1)</name>
    <dbReference type="NCBI Taxonomy" id="69014"/>
    <lineage>
        <taxon>Archaea</taxon>
        <taxon>Methanobacteriati</taxon>
        <taxon>Methanobacteriota</taxon>
        <taxon>Thermococci</taxon>
        <taxon>Thermococcales</taxon>
        <taxon>Thermococcaceae</taxon>
        <taxon>Thermococcus</taxon>
    </lineage>
</organism>
<name>PYRI_THEKO</name>
<protein>
    <recommendedName>
        <fullName evidence="1">Aspartate carbamoyltransferase regulatory chain</fullName>
    </recommendedName>
</protein>
<feature type="chain" id="PRO_0000142341" description="Aspartate carbamoyltransferase regulatory chain">
    <location>
        <begin position="1"/>
        <end position="152"/>
    </location>
</feature>
<feature type="binding site" evidence="1">
    <location>
        <position position="108"/>
    </location>
    <ligand>
        <name>Zn(2+)</name>
        <dbReference type="ChEBI" id="CHEBI:29105"/>
    </ligand>
</feature>
<feature type="binding site" evidence="1">
    <location>
        <position position="113"/>
    </location>
    <ligand>
        <name>Zn(2+)</name>
        <dbReference type="ChEBI" id="CHEBI:29105"/>
    </ligand>
</feature>
<feature type="binding site" evidence="1">
    <location>
        <position position="136"/>
    </location>
    <ligand>
        <name>Zn(2+)</name>
        <dbReference type="ChEBI" id="CHEBI:29105"/>
    </ligand>
</feature>
<feature type="binding site" evidence="1">
    <location>
        <position position="139"/>
    </location>
    <ligand>
        <name>Zn(2+)</name>
        <dbReference type="ChEBI" id="CHEBI:29105"/>
    </ligand>
</feature>
<accession>Q5JHN0</accession>
<keyword id="KW-0479">Metal-binding</keyword>
<keyword id="KW-0665">Pyrimidine biosynthesis</keyword>
<keyword id="KW-1185">Reference proteome</keyword>
<keyword id="KW-0862">Zinc</keyword>
<proteinExistence type="inferred from homology"/>
<comment type="function">
    <text evidence="1">Involved in allosteric regulation of aspartate carbamoyltransferase.</text>
</comment>
<comment type="cofactor">
    <cofactor evidence="1">
        <name>Zn(2+)</name>
        <dbReference type="ChEBI" id="CHEBI:29105"/>
    </cofactor>
    <text evidence="1">Binds 1 zinc ion per subunit.</text>
</comment>
<comment type="subunit">
    <text evidence="1">Contains catalytic and regulatory chains.</text>
</comment>
<comment type="similarity">
    <text evidence="1">Belongs to the PyrI family.</text>
</comment>
<sequence length="152" mass="17151">MPENLKIEVIPEGTVIDHIPAGKWLKVIEILGLTKPNGGTLLIASNVPSKKLGRKDIVKVEGRYLSEEEVNKIALIAPMATVNIVKDYKIIEKFNVEIPDEITGILKCPNPNCVSNHEYVTPRFHVESREPLKLRCHYCERTINEDEIAQNL</sequence>
<evidence type="ECO:0000255" key="1">
    <source>
        <dbReference type="HAMAP-Rule" id="MF_00002"/>
    </source>
</evidence>
<gene>
    <name evidence="1" type="primary">pyrI</name>
    <name type="ordered locus">TK2195</name>
</gene>
<reference key="1">
    <citation type="journal article" date="2005" name="Genome Res.">
        <title>Complete genome sequence of the hyperthermophilic archaeon Thermococcus kodakaraensis KOD1 and comparison with Pyrococcus genomes.</title>
        <authorList>
            <person name="Fukui T."/>
            <person name="Atomi H."/>
            <person name="Kanai T."/>
            <person name="Matsumi R."/>
            <person name="Fujiwara S."/>
            <person name="Imanaka T."/>
        </authorList>
    </citation>
    <scope>NUCLEOTIDE SEQUENCE [LARGE SCALE GENOMIC DNA]</scope>
    <source>
        <strain>ATCC BAA-918 / JCM 12380 / KOD1</strain>
    </source>
</reference>